<reference key="1">
    <citation type="journal article" date="2000" name="Biochemistry">
        <title>Novel heme-containing lyase, phenylacetaldoxime dehydratase from Bacillus sp. strain OxB-1: purification, characterization, and molecular cloning of the gene.</title>
        <authorList>
            <person name="Kato Y."/>
            <person name="Nakamura K."/>
            <person name="Sakiyama H."/>
            <person name="Mayhew S.G."/>
            <person name="Asano Y."/>
        </authorList>
    </citation>
    <scope>NUCLEOTIDE SEQUENCE [GENOMIC DNA]</scope>
    <scope>PROTEIN SEQUENCE OF 2-14</scope>
</reference>
<name>NRL_BACSX</name>
<accession>P82605</accession>
<comment type="catalytic activity">
    <reaction>
        <text>a nitrile + 2 H2O = a carboxylate + NH4(+)</text>
        <dbReference type="Rhea" id="RHEA:21724"/>
        <dbReference type="ChEBI" id="CHEBI:15377"/>
        <dbReference type="ChEBI" id="CHEBI:18379"/>
        <dbReference type="ChEBI" id="CHEBI:28938"/>
        <dbReference type="ChEBI" id="CHEBI:29067"/>
        <dbReference type="EC" id="3.5.5.1"/>
    </reaction>
</comment>
<comment type="similarity">
    <text evidence="3">Belongs to the carbon-nitrogen hydrolase superfamily. Nitrilase family.</text>
</comment>
<organism>
    <name type="scientific">Bacillus sp. (strain OxB-1)</name>
    <dbReference type="NCBI Taxonomy" id="98228"/>
    <lineage>
        <taxon>Bacteria</taxon>
        <taxon>Bacillati</taxon>
        <taxon>Bacillota</taxon>
        <taxon>Bacilli</taxon>
        <taxon>Bacillales</taxon>
        <taxon>Bacillaceae</taxon>
        <taxon>Bacillus</taxon>
    </lineage>
</organism>
<feature type="initiator methionine" description="Removed" evidence="2">
    <location>
        <position position="1"/>
    </location>
</feature>
<feature type="chain" id="PRO_0000204043" description="Nitrilase">
    <location>
        <begin position="2"/>
        <end position="339"/>
    </location>
</feature>
<feature type="domain" description="CN hydrolase" evidence="1">
    <location>
        <begin position="7"/>
        <end position="277"/>
    </location>
</feature>
<feature type="active site" description="Proton acceptor" evidence="1">
    <location>
        <position position="47"/>
    </location>
</feature>
<feature type="active site" description="Proton donor" evidence="1">
    <location>
        <position position="128"/>
    </location>
</feature>
<feature type="active site" description="Nucleophile" evidence="1">
    <location>
        <position position="162"/>
    </location>
</feature>
<sequence length="339" mass="37784">MSNYPKYRVAAVQASPVLLDLDATIDKTCRLVDEAAANGAKVIAFPEAFIPGYPWWIWLGNADYGMKYYIQLYKNSVEIPSLAVQKLSSAGTNKVYFCVSVTEKDGGSLYLTQLWFDPNGDLIGKHRKLKATNAEKTIWGDGDGSMMPVFETEFGNLGGLQCWEHFLPLNVAAMASMNEQVHVASWPIGMPQEGHLFGPEQCVTATKYYAISNQVFCLLSSQIWTEEQRDKICETEEQRNFMKVGHGFSKIIAPNGMEIGNKLAHDEEGITYADIDLEQIIPGKFLIDSAGHYSTPGFLSLSFDRTEKKPIKHIGESAQETVTYEEIQYGNKANVKVHS</sequence>
<gene>
    <name type="primary">nit</name>
</gene>
<dbReference type="EC" id="3.5.5.1"/>
<dbReference type="EMBL" id="AB028892">
    <property type="protein sequence ID" value="BAA90460.1"/>
    <property type="molecule type" value="Genomic_DNA"/>
</dbReference>
<dbReference type="SMR" id="P82605"/>
<dbReference type="STRING" id="98228.OXB_1096"/>
<dbReference type="BRENDA" id="3.5.5.1">
    <property type="organism ID" value="16272"/>
</dbReference>
<dbReference type="GO" id="GO:0000257">
    <property type="term" value="F:nitrilase activity"/>
    <property type="evidence" value="ECO:0007669"/>
    <property type="project" value="UniProtKB-EC"/>
</dbReference>
<dbReference type="CDD" id="cd07564">
    <property type="entry name" value="nitrilases_CHs"/>
    <property type="match status" value="1"/>
</dbReference>
<dbReference type="Gene3D" id="3.60.110.10">
    <property type="entry name" value="Carbon-nitrogen hydrolase"/>
    <property type="match status" value="1"/>
</dbReference>
<dbReference type="InterPro" id="IPR003010">
    <property type="entry name" value="C-N_Hydrolase"/>
</dbReference>
<dbReference type="InterPro" id="IPR036526">
    <property type="entry name" value="C-N_Hydrolase_sf"/>
</dbReference>
<dbReference type="InterPro" id="IPR000132">
    <property type="entry name" value="Nitrilase/CN_hydratase_CS"/>
</dbReference>
<dbReference type="InterPro" id="IPR044149">
    <property type="entry name" value="Nitrilases_CHs"/>
</dbReference>
<dbReference type="PANTHER" id="PTHR46044:SF1">
    <property type="entry name" value="CN HYDROLASE DOMAIN-CONTAINING PROTEIN"/>
    <property type="match status" value="1"/>
</dbReference>
<dbReference type="PANTHER" id="PTHR46044">
    <property type="entry name" value="NITRILASE"/>
    <property type="match status" value="1"/>
</dbReference>
<dbReference type="Pfam" id="PF00795">
    <property type="entry name" value="CN_hydrolase"/>
    <property type="match status" value="1"/>
</dbReference>
<dbReference type="SUPFAM" id="SSF56317">
    <property type="entry name" value="Carbon-nitrogen hydrolase"/>
    <property type="match status" value="1"/>
</dbReference>
<dbReference type="PROSITE" id="PS50263">
    <property type="entry name" value="CN_HYDROLASE"/>
    <property type="match status" value="1"/>
</dbReference>
<dbReference type="PROSITE" id="PS00920">
    <property type="entry name" value="NITRIL_CHT_1"/>
    <property type="match status" value="1"/>
</dbReference>
<proteinExistence type="evidence at protein level"/>
<keyword id="KW-0903">Direct protein sequencing</keyword>
<keyword id="KW-0378">Hydrolase</keyword>
<evidence type="ECO:0000255" key="1">
    <source>
        <dbReference type="PROSITE-ProRule" id="PRU00054"/>
    </source>
</evidence>
<evidence type="ECO:0000269" key="2">
    <source>
    </source>
</evidence>
<evidence type="ECO:0000305" key="3"/>
<protein>
    <recommendedName>
        <fullName>Nitrilase</fullName>
        <ecNumber>3.5.5.1</ecNumber>
    </recommendedName>
</protein>